<sequence>MEAILNKNMKILIVDDFSTMRRIVKNLLRDLGFNNTQEADDGLTALPMLKKGDFDFVVTDWNMPGMQGIDLLKNIRADEELKHLPVLMITAEAKREQIIEAAQAGVNGYIVKPFTAATLKEKLDKIFERL</sequence>
<gene>
    <name evidence="8" type="primary">cheY-3</name>
    <name evidence="8" type="ordered locus">VC0395_A1653</name>
</gene>
<proteinExistence type="evidence at protein level"/>
<dbReference type="EMBL" id="CP000627">
    <property type="protein sequence ID" value="ABQ22016.1"/>
    <property type="molecule type" value="Genomic_DNA"/>
</dbReference>
<dbReference type="PDB" id="4JP1">
    <property type="method" value="X-ray"/>
    <property type="resolution" value="2.46 A"/>
    <property type="chains" value="A=6-128"/>
</dbReference>
<dbReference type="PDB" id="4LX8">
    <property type="method" value="X-ray"/>
    <property type="resolution" value="2.20 A"/>
    <property type="chains" value="A=6-128"/>
</dbReference>
<dbReference type="PDBsum" id="4JP1"/>
<dbReference type="PDBsum" id="4LX8"/>
<dbReference type="SMR" id="A0A0H3AMJ9"/>
<dbReference type="IntAct" id="A0A0H3AMJ9">
    <property type="interactions" value="1"/>
</dbReference>
<dbReference type="KEGG" id="vco:VC0395_A1653"/>
<dbReference type="KEGG" id="vcr:VC395_2180"/>
<dbReference type="PATRIC" id="fig|345073.21.peg.2107"/>
<dbReference type="eggNOG" id="COG0745">
    <property type="taxonomic scope" value="Bacteria"/>
</dbReference>
<dbReference type="EvolutionaryTrace" id="A0A0H3AMJ9"/>
<dbReference type="Proteomes" id="UP000000249">
    <property type="component" value="Chromosome 2"/>
</dbReference>
<dbReference type="GO" id="GO:0005737">
    <property type="term" value="C:cytoplasm"/>
    <property type="evidence" value="ECO:0007669"/>
    <property type="project" value="UniProtKB-SubCell"/>
</dbReference>
<dbReference type="GO" id="GO:0046872">
    <property type="term" value="F:metal ion binding"/>
    <property type="evidence" value="ECO:0007669"/>
    <property type="project" value="UniProtKB-KW"/>
</dbReference>
<dbReference type="GO" id="GO:0097588">
    <property type="term" value="P:archaeal or bacterial-type flagellum-dependent cell motility"/>
    <property type="evidence" value="ECO:0007669"/>
    <property type="project" value="UniProtKB-KW"/>
</dbReference>
<dbReference type="GO" id="GO:0006935">
    <property type="term" value="P:chemotaxis"/>
    <property type="evidence" value="ECO:0007669"/>
    <property type="project" value="UniProtKB-KW"/>
</dbReference>
<dbReference type="GO" id="GO:0000160">
    <property type="term" value="P:phosphorelay signal transduction system"/>
    <property type="evidence" value="ECO:0007669"/>
    <property type="project" value="UniProtKB-KW"/>
</dbReference>
<dbReference type="CDD" id="cd19923">
    <property type="entry name" value="REC_CheY_CheY3"/>
    <property type="match status" value="1"/>
</dbReference>
<dbReference type="FunFam" id="3.40.50.2300:FF:000019">
    <property type="entry name" value="Chemotaxis response regulator CheY"/>
    <property type="match status" value="1"/>
</dbReference>
<dbReference type="Gene3D" id="3.40.50.2300">
    <property type="match status" value="1"/>
</dbReference>
<dbReference type="InterPro" id="IPR011006">
    <property type="entry name" value="CheY-like_superfamily"/>
</dbReference>
<dbReference type="InterPro" id="IPR001789">
    <property type="entry name" value="Sig_transdc_resp-reg_receiver"/>
</dbReference>
<dbReference type="InterPro" id="IPR052048">
    <property type="entry name" value="ST_Response_Regulator"/>
</dbReference>
<dbReference type="NCBIfam" id="NF007901">
    <property type="entry name" value="PRK10610.1"/>
    <property type="match status" value="1"/>
</dbReference>
<dbReference type="PANTHER" id="PTHR43228">
    <property type="entry name" value="TWO-COMPONENT RESPONSE REGULATOR"/>
    <property type="match status" value="1"/>
</dbReference>
<dbReference type="PANTHER" id="PTHR43228:SF1">
    <property type="entry name" value="TWO-COMPONENT RESPONSE REGULATOR ARR22"/>
    <property type="match status" value="1"/>
</dbReference>
<dbReference type="Pfam" id="PF00072">
    <property type="entry name" value="Response_reg"/>
    <property type="match status" value="1"/>
</dbReference>
<dbReference type="SMART" id="SM00448">
    <property type="entry name" value="REC"/>
    <property type="match status" value="1"/>
</dbReference>
<dbReference type="SUPFAM" id="SSF52172">
    <property type="entry name" value="CheY-like"/>
    <property type="match status" value="1"/>
</dbReference>
<dbReference type="PROSITE" id="PS50110">
    <property type="entry name" value="RESPONSE_REGULATORY"/>
    <property type="match status" value="1"/>
</dbReference>
<name>CHEY3_VIBC3</name>
<protein>
    <recommendedName>
        <fullName evidence="7">Chemotaxis protein CheY-3</fullName>
    </recommendedName>
    <alternativeName>
        <fullName evidence="6">Chemotaxis response regulator CheY-3</fullName>
    </alternativeName>
</protein>
<accession>A0A0H3AMJ9</accession>
<organism evidence="9">
    <name type="scientific">Vibrio cholerae serotype O1 (strain ATCC 39541 / Classical Ogawa 395 / O395)</name>
    <dbReference type="NCBI Taxonomy" id="345073"/>
    <lineage>
        <taxon>Bacteria</taxon>
        <taxon>Pseudomonadati</taxon>
        <taxon>Pseudomonadota</taxon>
        <taxon>Gammaproteobacteria</taxon>
        <taxon>Vibrionales</taxon>
        <taxon>Vibrionaceae</taxon>
        <taxon>Vibrio</taxon>
    </lineage>
</organism>
<comment type="function">
    <text evidence="1 3 5">Acts as a response regulator to control chemotaxis (PubMed:16321945, PubMed:24066084). Involved in the transmission of sensory signals from the chemoreceptors to the flagellar motors (PubMed:16321945, PubMed:24066084). Switches the flagellar rotation by binding to the flagellar motor switch protein FliM (PubMed:16321945, PubMed:24066084). In its active (phosphorylated or acetylated) form, exhibits enhanced binding to a switch component, FliM, at the flagellar motor which induces a change from counterclockwise to clockwise flagellar rotation (By similarity).</text>
</comment>
<comment type="cofactor">
    <cofactor evidence="5">
        <name>Mg(2+)</name>
        <dbReference type="ChEBI" id="CHEBI:18420"/>
    </cofactor>
    <text evidence="5">Binds 1 Mg(2+) ion per subunit.</text>
</comment>
<comment type="subunit">
    <text evidence="5">Interacts with FliM.</text>
</comment>
<comment type="subcellular location">
    <subcellularLocation>
        <location evidence="7">Cytoplasm</location>
    </subcellularLocation>
</comment>
<comment type="PTM">
    <text evidence="4">Phosphorylated by CheA-2 and to a lesser extend by VieS.</text>
</comment>
<comment type="disruption phenotype">
    <text evidence="3">Defective in chemotaxis and reorientation in liquid medium.</text>
</comment>
<reference evidence="9" key="1">
    <citation type="submission" date="2007-03" db="EMBL/GenBank/DDBJ databases">
        <authorList>
            <person name="Heidelberg J."/>
        </authorList>
    </citation>
    <scope>NUCLEOTIDE SEQUENCE [LARGE SCALE GENOMIC DNA]</scope>
    <source>
        <strain evidence="9">ATCC 39541 / Classical Ogawa 395 / O395</strain>
    </source>
</reference>
<reference evidence="7" key="2">
    <citation type="journal article" date="2005" name="J. Bacteriol.">
        <title>Only one of the five CheY homologs in Vibrio cholerae directly switches flagellar rotation.</title>
        <authorList>
            <person name="Hyakutake A."/>
            <person name="Homma M."/>
            <person name="Austin M.J."/>
            <person name="Boin M.A."/>
            <person name="Haese C.C."/>
            <person name="Kawagishi I."/>
        </authorList>
    </citation>
    <scope>FUNCTION</scope>
    <scope>DISRUPTION PHENOTYPE</scope>
    <scope>MUTAGENESIS OF ASP-16 AND LYS-120</scope>
</reference>
<reference evidence="7" key="3">
    <citation type="journal article" date="2008" name="J. Bacteriol.">
        <title>The vibrio cholerae hybrid sensor kinase VieS contributes to motility and biofilm regulation by altering the cyclic diguanylate level.</title>
        <authorList>
            <person name="Martinez-Wilson H.F."/>
            <person name="Tamayo R."/>
            <person name="Tischler A.D."/>
            <person name="Lazinski D.W."/>
            <person name="Camilli A."/>
        </authorList>
    </citation>
    <scope>PHOSPHORYLATION BY CHEA-2 AND VIES</scope>
</reference>
<reference evidence="10 11" key="4">
    <citation type="journal article" date="2013" name="PLoS ONE">
        <title>Conformational barrier of CheY3 and inability of CheY4 to bind FliM control the flagellar motor action in Vibrio cholerae.</title>
        <authorList>
            <person name="Biswas M."/>
            <person name="Dey S."/>
            <person name="Khamrui S."/>
            <person name="Sen U."/>
            <person name="Dasgupta J."/>
        </authorList>
    </citation>
    <scope>X-RAY CRYSTALLOGRAPHY (2.20 ANGSTROMS) OF 6-128 IN COMPLEX WITH MAGNESIUM AND OF MUTANT ALA-97</scope>
    <scope>FUNCTION</scope>
    <scope>INTERACTION WITH FLIM</scope>
    <scope>COFACTOR</scope>
    <scope>MUTAGENESIS OF ASP-60; GLN-97 AND GLU-100</scope>
</reference>
<keyword id="KW-0002">3D-structure</keyword>
<keyword id="KW-0145">Chemotaxis</keyword>
<keyword id="KW-0963">Cytoplasm</keyword>
<keyword id="KW-0283">Flagellar rotation</keyword>
<keyword id="KW-0460">Magnesium</keyword>
<keyword id="KW-0479">Metal-binding</keyword>
<keyword id="KW-0597">Phosphoprotein</keyword>
<keyword id="KW-0902">Two-component regulatory system</keyword>
<feature type="chain" id="PRO_0000458741" description="Chemotaxis protein CheY-3">
    <location>
        <begin position="1"/>
        <end position="130"/>
    </location>
</feature>
<feature type="domain" description="Response regulatory" evidence="2">
    <location>
        <begin position="10"/>
        <end position="127"/>
    </location>
</feature>
<feature type="binding site" evidence="5 10 11">
    <location>
        <position position="15"/>
    </location>
    <ligand>
        <name>Mg(2+)</name>
        <dbReference type="ChEBI" id="CHEBI:18420"/>
    </ligand>
</feature>
<feature type="binding site" evidence="5 10 11">
    <location>
        <position position="16"/>
    </location>
    <ligand>
        <name>Mg(2+)</name>
        <dbReference type="ChEBI" id="CHEBI:18420"/>
    </ligand>
</feature>
<feature type="binding site" evidence="5 10 11">
    <location>
        <position position="60"/>
    </location>
    <ligand>
        <name>Mg(2+)</name>
        <dbReference type="ChEBI" id="CHEBI:18420"/>
    </ligand>
</feature>
<feature type="binding site" evidence="5 10 11">
    <location>
        <position position="62"/>
    </location>
    <ligand>
        <name>Mg(2+)</name>
        <dbReference type="ChEBI" id="CHEBI:18420"/>
    </ligand>
</feature>
<feature type="modified residue" description="4-aspartylphosphate" evidence="2">
    <location>
        <position position="60"/>
    </location>
</feature>
<feature type="mutagenesis site" description="More frequent reorientation during swimming behavior." evidence="3">
    <original>D</original>
    <variation>K</variation>
    <location>
        <position position="16"/>
    </location>
</feature>
<feature type="mutagenesis site" description="Loss of interaction with FliM." evidence="5">
    <original>D</original>
    <variation>A</variation>
    <location>
        <position position="60"/>
    </location>
</feature>
<feature type="mutagenesis site" description="Does not affect overall protein structure. No impact on interaction with FliM. No impact on interaction with FliM; when associated with Ala-100." evidence="5">
    <original>Q</original>
    <variation>A</variation>
    <location>
        <position position="97"/>
    </location>
</feature>
<feature type="mutagenesis site" description="No impact on interaction with FliM; when associated with Ala-97." evidence="5">
    <original>E</original>
    <variation>A</variation>
    <location>
        <position position="100"/>
    </location>
</feature>
<feature type="mutagenesis site" description="Less frequent reorientation during swimming behavior." evidence="3">
    <original>K</original>
    <variation>E</variation>
    <location>
        <position position="120"/>
    </location>
</feature>
<feature type="strand" evidence="12">
    <location>
        <begin position="11"/>
        <end position="14"/>
    </location>
</feature>
<feature type="helix" evidence="12">
    <location>
        <begin position="18"/>
        <end position="30"/>
    </location>
</feature>
<feature type="strand" evidence="12">
    <location>
        <begin position="36"/>
        <end position="41"/>
    </location>
</feature>
<feature type="helix" evidence="12">
    <location>
        <begin position="42"/>
        <end position="52"/>
    </location>
</feature>
<feature type="strand" evidence="12">
    <location>
        <begin position="55"/>
        <end position="61"/>
    </location>
</feature>
<feature type="strand" evidence="12">
    <location>
        <begin position="64"/>
        <end position="66"/>
    </location>
</feature>
<feature type="helix" evidence="12">
    <location>
        <begin position="68"/>
        <end position="76"/>
    </location>
</feature>
<feature type="turn" evidence="12">
    <location>
        <begin position="79"/>
        <end position="83"/>
    </location>
</feature>
<feature type="strand" evidence="12">
    <location>
        <begin position="86"/>
        <end position="91"/>
    </location>
</feature>
<feature type="helix" evidence="12">
    <location>
        <begin position="95"/>
        <end position="103"/>
    </location>
</feature>
<feature type="strand" evidence="12">
    <location>
        <begin position="107"/>
        <end position="113"/>
    </location>
</feature>
<feature type="helix" evidence="12">
    <location>
        <begin position="116"/>
        <end position="126"/>
    </location>
</feature>
<evidence type="ECO:0000250" key="1">
    <source>
        <dbReference type="UniProtKB" id="P0AE67"/>
    </source>
</evidence>
<evidence type="ECO:0000255" key="2">
    <source>
        <dbReference type="PROSITE-ProRule" id="PRU00169"/>
    </source>
</evidence>
<evidence type="ECO:0000269" key="3">
    <source>
    </source>
</evidence>
<evidence type="ECO:0000269" key="4">
    <source>
    </source>
</evidence>
<evidence type="ECO:0000269" key="5">
    <source>
    </source>
</evidence>
<evidence type="ECO:0000303" key="6">
    <source>
    </source>
</evidence>
<evidence type="ECO:0000305" key="7"/>
<evidence type="ECO:0000312" key="8">
    <source>
        <dbReference type="EMBL" id="ABQ22016.1"/>
    </source>
</evidence>
<evidence type="ECO:0000312" key="9">
    <source>
        <dbReference type="Proteomes" id="UP000000249"/>
    </source>
</evidence>
<evidence type="ECO:0007744" key="10">
    <source>
        <dbReference type="PDB" id="4JP1"/>
    </source>
</evidence>
<evidence type="ECO:0007744" key="11">
    <source>
        <dbReference type="PDB" id="4LX8"/>
    </source>
</evidence>
<evidence type="ECO:0007829" key="12">
    <source>
        <dbReference type="PDB" id="4LX8"/>
    </source>
</evidence>